<sequence length="605" mass="69130">MALPACAVREFEPPRQPERGAPVRTTCPRRHSRVEAELAASRPGSVAASVRAGPPRGVSHGFHTRPLLDKPRKASSSLAGAACAPLFALLSRGRRRRMHVLRRRWDLGSLCRALLTRGLAALGHSLKHVLGAIFSKIFGPMASVGNMDEKSNKLLLALVMLFLFAVIVLQYVCPGTECQLLRLQAFSSPVPDPYRSEDESSARFVPRYNFTRGDLLRKVDFDIKGDDLIVFLHIQKTGGTTFGRHLVRNIQLEQPCECRVGQKKCTCHRPGKRETWLFSRFSTGWSCGLHADWTELTSCVPSVVDGKRDARLRPSRNFHYITILRDPVSRYLSEWRHVQRGATWKASLHVCDGRPPTSEELPSCYTGDDWSGCPLKEFMDCPYNLANNRQVRMLSDLTLVGCYNLSVMPEKQRNKVLLESAKSNLKHMAFFGLTEFQRKTQYLFEKTFNMNFISPFTQYNTTRASSVEINEEIQKRIEGLNFLDMELYSYAKDLFLQRYQFMRQKEHQEARRKRQEQRKFLKGRLLQTHFQSQGQGQSQNPNQNQSQNPNPNANQNLTQNLMQNLTQSLSQKENRESPKQNSGKEQNDNTSNGTNDYIGSVEKWR</sequence>
<comment type="function">
    <text evidence="4 5">6-O-sulfation enzyme which catalyzes the transfer of sulfate from 3'-phosphoadenosine 5'-phosphosulfate (PAPS) to position 6 of the N-sulfoglucosamine residue (GlcNS) of heparan sulfate.</text>
</comment>
<comment type="catalytic activity">
    <reaction evidence="4 5">
        <text>alpha-D-glucosaminyl-[heparan sulfate](n) + 3'-phosphoadenylyl sulfate = 6-sulfo-alpha-D-glucosaminyl-[heparan sulfate](n) + adenosine 3',5'-bisphosphate + H(+)</text>
        <dbReference type="Rhea" id="RHEA:56604"/>
        <dbReference type="Rhea" id="RHEA-COMP:9830"/>
        <dbReference type="Rhea" id="RHEA-COMP:14621"/>
        <dbReference type="ChEBI" id="CHEBI:15378"/>
        <dbReference type="ChEBI" id="CHEBI:58339"/>
        <dbReference type="ChEBI" id="CHEBI:58343"/>
        <dbReference type="ChEBI" id="CHEBI:58388"/>
        <dbReference type="ChEBI" id="CHEBI:140604"/>
    </reaction>
    <physiologicalReaction direction="left-to-right" evidence="5">
        <dbReference type="Rhea" id="RHEA:56605"/>
    </physiologicalReaction>
</comment>
<comment type="subcellular location">
    <subcellularLocation>
        <location evidence="9">Membrane</location>
        <topology evidence="9">Single-pass type II membrane protein</topology>
    </subcellularLocation>
</comment>
<comment type="alternative products">
    <event type="alternative splicing"/>
    <isoform>
        <id>Q96MM7-1</id>
        <name>1</name>
        <sequence type="displayed"/>
    </isoform>
    <isoform>
        <id>Q96MM7-2</id>
        <name>2</name>
        <name>HS6ST-2S</name>
        <sequence type="described" ref="VSP_015846"/>
    </isoform>
    <isoform>
        <id>Q96MM7-3</id>
        <name>3</name>
        <name>HS6ST-2</name>
        <sequence type="described" ref="VSP_015846 VSP_015847"/>
    </isoform>
    <isoform>
        <id>Q96MM7-4</id>
        <name>4</name>
        <sequence type="described" ref="VSP_015847"/>
    </isoform>
</comment>
<comment type="disease" evidence="5">
    <disease id="DI-05579">
        <name>Paganini-Miozzo syndrome</name>
        <acronym>MRXSPM</acronym>
        <description>An X-linked, syndromic, neurodevelopmental disorder characterized by intellectual disability, global developmental delay, severe myopia, and mild facial dysmorphism.</description>
        <dbReference type="MIM" id="301025"/>
    </disease>
    <text>The disease may be caused by variants affecting the gene represented in this entry.</text>
</comment>
<comment type="similarity">
    <text evidence="9">Belongs to the sulfotransferase 6 family.</text>
</comment>
<protein>
    <recommendedName>
        <fullName evidence="9">Heparan-sulfate 6-O-sulfotransferase 2</fullName>
        <shortName>HS6ST-2</shortName>
        <ecNumber evidence="4">2.8.2.-</ecNumber>
    </recommendedName>
</protein>
<keyword id="KW-0025">Alternative splicing</keyword>
<keyword id="KW-0225">Disease variant</keyword>
<keyword id="KW-0325">Glycoprotein</keyword>
<keyword id="KW-0991">Intellectual disability</keyword>
<keyword id="KW-0472">Membrane</keyword>
<keyword id="KW-1267">Proteomics identification</keyword>
<keyword id="KW-1185">Reference proteome</keyword>
<keyword id="KW-0735">Signal-anchor</keyword>
<keyword id="KW-0808">Transferase</keyword>
<keyword id="KW-0812">Transmembrane</keyword>
<keyword id="KW-1133">Transmembrane helix</keyword>
<proteinExistence type="evidence at protein level"/>
<dbReference type="EC" id="2.8.2.-" evidence="4"/>
<dbReference type="EMBL" id="AB067776">
    <property type="protein sequence ID" value="BAC07183.1"/>
    <property type="molecule type" value="mRNA"/>
</dbReference>
<dbReference type="EMBL" id="AB067777">
    <property type="protein sequence ID" value="BAC07184.1"/>
    <property type="molecule type" value="mRNA"/>
</dbReference>
<dbReference type="EMBL" id="AK027720">
    <property type="protein sequence ID" value="BAB55322.1"/>
    <property type="molecule type" value="mRNA"/>
</dbReference>
<dbReference type="EMBL" id="AK056706">
    <property type="protein sequence ID" value="BAB71260.1"/>
    <property type="molecule type" value="mRNA"/>
</dbReference>
<dbReference type="EMBL" id="Z81365">
    <property type="protein sequence ID" value="CAX30811.1"/>
    <property type="molecule type" value="Genomic_DNA"/>
</dbReference>
<dbReference type="EMBL" id="Z86064">
    <property type="protein sequence ID" value="CAX30811.1"/>
    <property type="status" value="JOINED"/>
    <property type="molecule type" value="Genomic_DNA"/>
</dbReference>
<dbReference type="EMBL" id="Z81365">
    <property type="protein sequence ID" value="CAX30812.1"/>
    <property type="molecule type" value="Genomic_DNA"/>
</dbReference>
<dbReference type="EMBL" id="Z86064">
    <property type="protein sequence ID" value="CAX30812.1"/>
    <property type="status" value="JOINED"/>
    <property type="molecule type" value="Genomic_DNA"/>
</dbReference>
<dbReference type="EMBL" id="AL022309">
    <property type="status" value="NOT_ANNOTATED_CDS"/>
    <property type="molecule type" value="Genomic_DNA"/>
</dbReference>
<dbReference type="EMBL" id="AL022159">
    <property type="status" value="NOT_ANNOTATED_CDS"/>
    <property type="molecule type" value="Genomic_DNA"/>
</dbReference>
<dbReference type="EMBL" id="Z82205">
    <property type="status" value="NOT_ANNOTATED_CDS"/>
    <property type="molecule type" value="Genomic_DNA"/>
</dbReference>
<dbReference type="EMBL" id="Z86064">
    <property type="protein sequence ID" value="CAI42774.1"/>
    <property type="molecule type" value="Genomic_DNA"/>
</dbReference>
<dbReference type="EMBL" id="Z81365">
    <property type="protein sequence ID" value="CAI42774.1"/>
    <property type="status" value="JOINED"/>
    <property type="molecule type" value="Genomic_DNA"/>
</dbReference>
<dbReference type="EMBL" id="Z86064">
    <property type="protein sequence ID" value="CAI42775.1"/>
    <property type="molecule type" value="Genomic_DNA"/>
</dbReference>
<dbReference type="EMBL" id="Z81365">
    <property type="protein sequence ID" value="CAI42775.1"/>
    <property type="status" value="JOINED"/>
    <property type="molecule type" value="Genomic_DNA"/>
</dbReference>
<dbReference type="EMBL" id="BC037325">
    <property type="protein sequence ID" value="AAH37325.1"/>
    <property type="molecule type" value="mRNA"/>
</dbReference>
<dbReference type="EMBL" id="BC094718">
    <property type="protein sequence ID" value="AAH94718.1"/>
    <property type="molecule type" value="mRNA"/>
</dbReference>
<dbReference type="EMBL" id="BC110620">
    <property type="protein sequence ID" value="AAI10621.1"/>
    <property type="molecule type" value="mRNA"/>
</dbReference>
<dbReference type="EMBL" id="BC110621">
    <property type="protein sequence ID" value="AAI10622.1"/>
    <property type="molecule type" value="mRNA"/>
</dbReference>
<dbReference type="EMBL" id="AK075402">
    <property type="protein sequence ID" value="BAC11597.1"/>
    <property type="molecule type" value="mRNA"/>
</dbReference>
<dbReference type="EMBL" id="AL831923">
    <property type="protein sequence ID" value="CAD38583.1"/>
    <property type="molecule type" value="mRNA"/>
</dbReference>
<dbReference type="CCDS" id="CCDS48169.1">
    <molecule id="Q96MM7-1"/>
</dbReference>
<dbReference type="CCDS" id="CCDS48170.1">
    <molecule id="Q96MM7-4"/>
</dbReference>
<dbReference type="RefSeq" id="NP_001070656.1">
    <molecule id="Q96MM7-4"/>
    <property type="nucleotide sequence ID" value="NM_001077188.2"/>
</dbReference>
<dbReference type="RefSeq" id="NP_001381002.1">
    <molecule id="Q96MM7-4"/>
    <property type="nucleotide sequence ID" value="NM_001394073.1"/>
</dbReference>
<dbReference type="RefSeq" id="NP_001381003.1">
    <molecule id="Q96MM7-1"/>
    <property type="nucleotide sequence ID" value="NM_001394074.1"/>
</dbReference>
<dbReference type="RefSeq" id="NP_671704.3">
    <molecule id="Q96MM7-1"/>
    <property type="nucleotide sequence ID" value="NM_147175.3"/>
</dbReference>
<dbReference type="RefSeq" id="XP_005262547.1">
    <property type="nucleotide sequence ID" value="XM_005262490.3"/>
</dbReference>
<dbReference type="RefSeq" id="XP_011529708.1">
    <molecule id="Q96MM7-3"/>
    <property type="nucleotide sequence ID" value="XM_011531406.2"/>
</dbReference>
<dbReference type="RefSeq" id="XP_016885433.1">
    <property type="nucleotide sequence ID" value="XM_017029944.1"/>
</dbReference>
<dbReference type="RefSeq" id="XP_016885434.1">
    <molecule id="Q96MM7-3"/>
    <property type="nucleotide sequence ID" value="XM_017029945.2"/>
</dbReference>
<dbReference type="RefSeq" id="XP_047298575.1">
    <molecule id="Q96MM7-2"/>
    <property type="nucleotide sequence ID" value="XM_047442619.1"/>
</dbReference>
<dbReference type="SMR" id="Q96MM7"/>
<dbReference type="BioGRID" id="124671">
    <property type="interactions" value="135"/>
</dbReference>
<dbReference type="FunCoup" id="Q96MM7">
    <property type="interactions" value="481"/>
</dbReference>
<dbReference type="IntAct" id="Q96MM7">
    <property type="interactions" value="49"/>
</dbReference>
<dbReference type="STRING" id="9606.ENSP00000429473"/>
<dbReference type="GlyCosmos" id="Q96MM7">
    <property type="glycosylation" value="9 sites, 1 glycan"/>
</dbReference>
<dbReference type="GlyGen" id="Q96MM7">
    <property type="glycosylation" value="12 sites, 3 N-linked glycans (5 sites), 2 O-linked glycans (4 sites)"/>
</dbReference>
<dbReference type="iPTMnet" id="Q96MM7"/>
<dbReference type="PhosphoSitePlus" id="Q96MM7"/>
<dbReference type="SwissPalm" id="Q96MM7"/>
<dbReference type="BioMuta" id="HS6ST2"/>
<dbReference type="DMDM" id="77416506"/>
<dbReference type="jPOST" id="Q96MM7"/>
<dbReference type="MassIVE" id="Q96MM7"/>
<dbReference type="PaxDb" id="9606-ENSP00000429473"/>
<dbReference type="PeptideAtlas" id="Q96MM7"/>
<dbReference type="ProteomicsDB" id="19773"/>
<dbReference type="ProteomicsDB" id="77375">
    <molecule id="Q96MM7-1"/>
</dbReference>
<dbReference type="ProteomicsDB" id="77376">
    <molecule id="Q96MM7-2"/>
</dbReference>
<dbReference type="ProteomicsDB" id="77377">
    <molecule id="Q96MM7-3"/>
</dbReference>
<dbReference type="ABCD" id="Q96MM7">
    <property type="antibodies" value="7 sequenced antibodies"/>
</dbReference>
<dbReference type="Antibodypedia" id="30253">
    <property type="antibodies" value="76 antibodies from 19 providers"/>
</dbReference>
<dbReference type="DNASU" id="90161"/>
<dbReference type="Ensembl" id="ENST00000370833.7">
    <molecule id="Q96MM7-4"/>
    <property type="protein sequence ID" value="ENSP00000359870.3"/>
    <property type="gene ID" value="ENSG00000171004.19"/>
</dbReference>
<dbReference type="Ensembl" id="ENST00000370836.6">
    <molecule id="Q96MM7-1"/>
    <property type="protein sequence ID" value="ENSP00000359873.2"/>
    <property type="gene ID" value="ENSG00000171004.19"/>
</dbReference>
<dbReference type="Ensembl" id="ENST00000406696.5">
    <molecule id="Q96MM7-3"/>
    <property type="protein sequence ID" value="ENSP00000384013.5"/>
    <property type="gene ID" value="ENSG00000171004.19"/>
</dbReference>
<dbReference type="Ensembl" id="ENST00000521489.5">
    <molecule id="Q96MM7-4"/>
    <property type="protein sequence ID" value="ENSP00000429473.1"/>
    <property type="gene ID" value="ENSG00000171004.19"/>
</dbReference>
<dbReference type="Ensembl" id="ENST00000640529.2">
    <molecule id="Q96MM7-3"/>
    <property type="protein sequence ID" value="ENSP00000491722.2"/>
    <property type="gene ID" value="ENSG00000171004.19"/>
</dbReference>
<dbReference type="GeneID" id="90161"/>
<dbReference type="KEGG" id="hsa:90161"/>
<dbReference type="MANE-Select" id="ENST00000370833.7">
    <molecule id="Q96MM7-4"/>
    <property type="protein sequence ID" value="ENSP00000359870.3"/>
    <property type="RefSeq nucleotide sequence ID" value="NM_001394073.1"/>
    <property type="RefSeq protein sequence ID" value="NP_001381002.1"/>
</dbReference>
<dbReference type="UCSC" id="uc011mvd.2">
    <molecule id="Q96MM7-1"/>
    <property type="organism name" value="human"/>
</dbReference>
<dbReference type="AGR" id="HGNC:19133"/>
<dbReference type="CTD" id="90161"/>
<dbReference type="DisGeNET" id="90161"/>
<dbReference type="GeneCards" id="HS6ST2"/>
<dbReference type="HGNC" id="HGNC:19133">
    <property type="gene designation" value="HS6ST2"/>
</dbReference>
<dbReference type="HPA" id="ENSG00000171004">
    <property type="expression patterns" value="Tissue enhanced (brain, kidney, ovary)"/>
</dbReference>
<dbReference type="MalaCards" id="HS6ST2"/>
<dbReference type="MIM" id="300545">
    <property type="type" value="gene"/>
</dbReference>
<dbReference type="MIM" id="301025">
    <property type="type" value="phenotype"/>
</dbReference>
<dbReference type="neXtProt" id="NX_Q96MM7"/>
<dbReference type="OpenTargets" id="ENSG00000171004"/>
<dbReference type="PharmGKB" id="PA134950831"/>
<dbReference type="VEuPathDB" id="HostDB:ENSG00000171004"/>
<dbReference type="eggNOG" id="KOG3955">
    <property type="taxonomic scope" value="Eukaryota"/>
</dbReference>
<dbReference type="GeneTree" id="ENSGT00950000183071"/>
<dbReference type="HOGENOM" id="CLU_027877_1_0_1"/>
<dbReference type="InParanoid" id="Q96MM7"/>
<dbReference type="OMA" id="WDLDENS"/>
<dbReference type="OrthoDB" id="406981at2759"/>
<dbReference type="PAN-GO" id="Q96MM7">
    <property type="GO annotations" value="2 GO annotations based on evolutionary models"/>
</dbReference>
<dbReference type="PhylomeDB" id="Q96MM7"/>
<dbReference type="TreeFam" id="TF312835"/>
<dbReference type="PathwayCommons" id="Q96MM7"/>
<dbReference type="Reactome" id="R-HSA-2022928">
    <property type="pathway name" value="HS-GAG biosynthesis"/>
</dbReference>
<dbReference type="SignaLink" id="Q96MM7"/>
<dbReference type="BioGRID-ORCS" id="90161">
    <property type="hits" value="14 hits in 767 CRISPR screens"/>
</dbReference>
<dbReference type="ChiTaRS" id="HS6ST2">
    <property type="organism name" value="human"/>
</dbReference>
<dbReference type="GenomeRNAi" id="90161"/>
<dbReference type="Pharos" id="Q96MM7">
    <property type="development level" value="Tbio"/>
</dbReference>
<dbReference type="PRO" id="PR:Q96MM7"/>
<dbReference type="Proteomes" id="UP000005640">
    <property type="component" value="Chromosome X"/>
</dbReference>
<dbReference type="RNAct" id="Q96MM7">
    <property type="molecule type" value="protein"/>
</dbReference>
<dbReference type="Bgee" id="ENSG00000171004">
    <property type="expression patterns" value="Expressed in endothelial cell and 162 other cell types or tissues"/>
</dbReference>
<dbReference type="ExpressionAtlas" id="Q96MM7">
    <property type="expression patterns" value="baseline and differential"/>
</dbReference>
<dbReference type="GO" id="GO:0000139">
    <property type="term" value="C:Golgi membrane"/>
    <property type="evidence" value="ECO:0000304"/>
    <property type="project" value="Reactome"/>
</dbReference>
<dbReference type="GO" id="GO:0017095">
    <property type="term" value="F:heparan sulfate 6-sulfotransferase activity"/>
    <property type="evidence" value="ECO:0000318"/>
    <property type="project" value="GO_Central"/>
</dbReference>
<dbReference type="GO" id="GO:0015012">
    <property type="term" value="P:heparan sulfate proteoglycan biosynthetic process"/>
    <property type="evidence" value="ECO:0007669"/>
    <property type="project" value="Ensembl"/>
</dbReference>
<dbReference type="FunFam" id="3.40.50.300:FF:000852">
    <property type="entry name" value="Heparan-sulfate 6-O-sulfotransferase"/>
    <property type="match status" value="1"/>
</dbReference>
<dbReference type="FunFam" id="3.40.50.300:FF:001933">
    <property type="entry name" value="Heparan-sulfate 6-O-sulfotransferase"/>
    <property type="match status" value="1"/>
</dbReference>
<dbReference type="Gene3D" id="3.40.50.300">
    <property type="entry name" value="P-loop containing nucleotide triphosphate hydrolases"/>
    <property type="match status" value="1"/>
</dbReference>
<dbReference type="InterPro" id="IPR010635">
    <property type="entry name" value="Heparan_SO4-6-sulfoTrfase"/>
</dbReference>
<dbReference type="InterPro" id="IPR027417">
    <property type="entry name" value="P-loop_NTPase"/>
</dbReference>
<dbReference type="InterPro" id="IPR005331">
    <property type="entry name" value="Sulfotransferase"/>
</dbReference>
<dbReference type="PANTHER" id="PTHR12812">
    <property type="entry name" value="HEPARAN SULFATE 6-O-SULFOTRANSFERASE 3"/>
    <property type="match status" value="1"/>
</dbReference>
<dbReference type="PANTHER" id="PTHR12812:SF6">
    <property type="entry name" value="HEPARAN-SULFATE 6-O-SULFOTRANSFERASE 2"/>
    <property type="match status" value="1"/>
</dbReference>
<dbReference type="Pfam" id="PF03567">
    <property type="entry name" value="Sulfotransfer_2"/>
    <property type="match status" value="1"/>
</dbReference>
<dbReference type="SUPFAM" id="SSF52540">
    <property type="entry name" value="P-loop containing nucleoside triphosphate hydrolases"/>
    <property type="match status" value="1"/>
</dbReference>
<accession>Q96MM7</accession>
<accession>B9WRT4</accession>
<accession>B9WRT5</accession>
<accession>E9PDY5</accession>
<accession>Q2TB13</accession>
<accession>Q4VC07</accession>
<accession>Q6PIC4</accession>
<accession>Q86SM9</accession>
<accession>Q8N3T4</accession>
<accession>Q8NBN4</accession>
<accession>Q96SJ4</accession>
<feature type="chain" id="PRO_0000190805" description="Heparan-sulfate 6-O-sulfotransferase 2">
    <location>
        <begin position="1"/>
        <end position="605"/>
    </location>
</feature>
<feature type="topological domain" description="Cytoplasmic" evidence="2">
    <location>
        <begin position="1"/>
        <end position="4"/>
    </location>
</feature>
<feature type="transmembrane region" description="Helical; Signal-anchor for type II membrane protein" evidence="2">
    <location>
        <begin position="5"/>
        <end position="27"/>
    </location>
</feature>
<feature type="topological domain" description="Lumenal" evidence="2">
    <location>
        <begin position="28"/>
        <end position="605"/>
    </location>
</feature>
<feature type="region of interest" description="Disordered" evidence="3">
    <location>
        <begin position="1"/>
        <end position="66"/>
    </location>
</feature>
<feature type="region of interest" description="Disordered" evidence="3">
    <location>
        <begin position="530"/>
        <end position="605"/>
    </location>
</feature>
<feature type="compositionally biased region" description="Basic and acidic residues" evidence="3">
    <location>
        <begin position="9"/>
        <end position="18"/>
    </location>
</feature>
<feature type="compositionally biased region" description="Low complexity" evidence="3">
    <location>
        <begin position="531"/>
        <end position="571"/>
    </location>
</feature>
<feature type="compositionally biased region" description="Polar residues" evidence="3">
    <location>
        <begin position="579"/>
        <end position="597"/>
    </location>
</feature>
<feature type="active site" description="Proton acceptor" evidence="1">
    <location>
        <position position="290"/>
    </location>
</feature>
<feature type="binding site" evidence="1">
    <location>
        <begin position="233"/>
        <end position="241"/>
    </location>
    <ligand>
        <name>3'-phosphoadenylyl sulfate</name>
        <dbReference type="ChEBI" id="CHEBI:58339"/>
    </ligand>
</feature>
<feature type="binding site" evidence="1">
    <location>
        <begin position="263"/>
        <end position="264"/>
    </location>
    <ligand>
        <name>substrate</name>
    </ligand>
</feature>
<feature type="binding site" evidence="1">
    <location>
        <position position="280"/>
    </location>
    <ligand>
        <name>substrate</name>
    </ligand>
</feature>
<feature type="binding site" evidence="1">
    <location>
        <position position="285"/>
    </location>
    <ligand>
        <name>substrate</name>
    </ligand>
</feature>
<feature type="binding site" evidence="1">
    <location>
        <position position="290"/>
    </location>
    <ligand>
        <name>substrate</name>
    </ligand>
</feature>
<feature type="binding site" evidence="1">
    <location>
        <position position="325"/>
    </location>
    <ligand>
        <name>3'-phosphoadenylyl sulfate</name>
        <dbReference type="ChEBI" id="CHEBI:58339"/>
    </ligand>
</feature>
<feature type="binding site" evidence="1">
    <location>
        <position position="333"/>
    </location>
    <ligand>
        <name>3'-phosphoadenylyl sulfate</name>
        <dbReference type="ChEBI" id="CHEBI:58339"/>
    </ligand>
</feature>
<feature type="binding site" evidence="1">
    <location>
        <position position="337"/>
    </location>
    <ligand>
        <name>substrate</name>
    </ligand>
</feature>
<feature type="binding site" evidence="1">
    <location>
        <position position="344"/>
    </location>
    <ligand>
        <name>substrate</name>
    </ligand>
</feature>
<feature type="binding site" evidence="1">
    <location>
        <begin position="457"/>
        <end position="459"/>
    </location>
    <ligand>
        <name>3'-phosphoadenylyl sulfate</name>
        <dbReference type="ChEBI" id="CHEBI:58339"/>
    </ligand>
</feature>
<feature type="binding site" evidence="1">
    <location>
        <begin position="463"/>
        <end position="464"/>
    </location>
    <ligand>
        <name>3'-phosphoadenylyl sulfate</name>
        <dbReference type="ChEBI" id="CHEBI:58339"/>
    </ligand>
</feature>
<feature type="glycosylation site" description="N-linked (GlcNAc...) asparagine" evidence="2">
    <location>
        <position position="209"/>
    </location>
</feature>
<feature type="glycosylation site" description="N-linked (GlcNAc...) asparagine" evidence="2">
    <location>
        <position position="404"/>
    </location>
</feature>
<feature type="glycosylation site" description="N-linked (GlcNAc...) asparagine" evidence="2">
    <location>
        <position position="460"/>
    </location>
</feature>
<feature type="glycosylation site" description="N-linked (GlcNAc...) asparagine" evidence="2">
    <location>
        <position position="544"/>
    </location>
</feature>
<feature type="glycosylation site" description="N-linked (GlcNAc...) asparagine" evidence="2">
    <location>
        <position position="556"/>
    </location>
</feature>
<feature type="glycosylation site" description="N-linked (GlcNAc...) asparagine" evidence="2">
    <location>
        <position position="564"/>
    </location>
</feature>
<feature type="glycosylation site" description="N-linked (GlcNAc...) asparagine" evidence="2">
    <location>
        <position position="589"/>
    </location>
</feature>
<feature type="glycosylation site" description="N-linked (GlcNAc...) asparagine" evidence="2">
    <location>
        <position position="592"/>
    </location>
</feature>
<feature type="splice variant" id="VSP_015846" description="In isoform 2 and isoform 3." evidence="6 7 8">
    <location>
        <begin position="1"/>
        <end position="146"/>
    </location>
</feature>
<feature type="splice variant" id="VSP_015847" description="In isoform 3 and isoform 4." evidence="6 8">
    <original>SR</original>
    <variation>SRWRIFQILDAASKDKRGSPNTNAGANSPSSTKTRNTSKSGK</variation>
    <location>
        <begin position="315"/>
        <end position="316"/>
    </location>
</feature>
<feature type="sequence variant" id="VAR_061828" description="In dbSNP:rs7053397.">
    <original>K</original>
    <variation>N</variation>
    <location>
        <position position="127"/>
    </location>
</feature>
<feature type="sequence variant" id="VAR_082055" description="In MRXSPM; uncertain significance; reduced sulfotransferase activity; no effect on protein levels; dbSNP:rs866919041." evidence="5">
    <original>G</original>
    <variation>R</variation>
    <location>
        <position position="306"/>
    </location>
</feature>
<feature type="sequence conflict" description="In Ref. 2; BAB71260." evidence="9" ref="2">
    <original>D</original>
    <variation>G</variation>
    <location>
        <position position="192"/>
    </location>
</feature>
<feature type="sequence conflict" description="In Ref. 4; AAH37325." evidence="9" ref="4">
    <original>C</original>
    <variation>Y</variation>
    <location>
        <position position="299"/>
    </location>
</feature>
<feature type="sequence conflict" description="In Ref. 5; BAC11597." evidence="9" ref="5">
    <original>K</original>
    <variation>R</variation>
    <location>
        <position position="426"/>
    </location>
</feature>
<feature type="sequence conflict" description="In Ref. 2; BAB71260." evidence="9" ref="2">
    <original>S</original>
    <variation>N</variation>
    <location>
        <position position="568"/>
    </location>
</feature>
<feature type="sequence conflict" description="In Ref. 5; BAC11597." evidence="9" ref="5">
    <original>Q</original>
    <variation>R</variation>
    <location>
        <position position="580"/>
    </location>
</feature>
<feature type="sequence conflict" description="In Ref. 5; BAC11597." evidence="9" ref="5">
    <original>E</original>
    <variation>G</variation>
    <location>
        <position position="585"/>
    </location>
</feature>
<evidence type="ECO:0000250" key="1">
    <source>
        <dbReference type="UniProtKB" id="A0MGZ7"/>
    </source>
</evidence>
<evidence type="ECO:0000255" key="2"/>
<evidence type="ECO:0000256" key="3">
    <source>
        <dbReference type="SAM" id="MobiDB-lite"/>
    </source>
</evidence>
<evidence type="ECO:0000269" key="4">
    <source>
    </source>
</evidence>
<evidence type="ECO:0000269" key="5">
    <source>
    </source>
</evidence>
<evidence type="ECO:0000303" key="6">
    <source>
    </source>
</evidence>
<evidence type="ECO:0000303" key="7">
    <source>
    </source>
</evidence>
<evidence type="ECO:0000303" key="8">
    <source>
    </source>
</evidence>
<evidence type="ECO:0000305" key="9"/>
<evidence type="ECO:0000312" key="10">
    <source>
        <dbReference type="HGNC" id="HGNC:19133"/>
    </source>
</evidence>
<reference key="1">
    <citation type="journal article" date="2003" name="Biochem. J.">
        <title>Biosynthesis of heparan sulphate with diverse structures and functions: two alternatively spliced forms of human heparan sulphate 6-O-sulphotransferase-2 having different expression patterns and properties.</title>
        <authorList>
            <person name="Habuchi H."/>
            <person name="Miyake G."/>
            <person name="Nogami K."/>
            <person name="Kuroiwa A."/>
            <person name="Matsuda Y."/>
            <person name="Kusche-Gullberg M."/>
            <person name="Habuchi O."/>
            <person name="Tanaka M."/>
            <person name="Kimata K."/>
        </authorList>
    </citation>
    <scope>NUCLEOTIDE SEQUENCE [MRNA] (ISOFORMS 2 AND 3)</scope>
    <scope>FUNCTION</scope>
    <scope>CATALYTIC ACTIVITY</scope>
    <source>
        <tissue>Brain</tissue>
    </source>
</reference>
<reference key="2">
    <citation type="journal article" date="2004" name="Nat. Genet.">
        <title>Complete sequencing and characterization of 21,243 full-length human cDNAs.</title>
        <authorList>
            <person name="Ota T."/>
            <person name="Suzuki Y."/>
            <person name="Nishikawa T."/>
            <person name="Otsuki T."/>
            <person name="Sugiyama T."/>
            <person name="Irie R."/>
            <person name="Wakamatsu A."/>
            <person name="Hayashi K."/>
            <person name="Sato H."/>
            <person name="Nagai K."/>
            <person name="Kimura K."/>
            <person name="Makita H."/>
            <person name="Sekine M."/>
            <person name="Obayashi M."/>
            <person name="Nishi T."/>
            <person name="Shibahara T."/>
            <person name="Tanaka T."/>
            <person name="Ishii S."/>
            <person name="Yamamoto J."/>
            <person name="Saito K."/>
            <person name="Kawai Y."/>
            <person name="Isono Y."/>
            <person name="Nakamura Y."/>
            <person name="Nagahari K."/>
            <person name="Murakami K."/>
            <person name="Yasuda T."/>
            <person name="Iwayanagi T."/>
            <person name="Wagatsuma M."/>
            <person name="Shiratori A."/>
            <person name="Sudo H."/>
            <person name="Hosoiri T."/>
            <person name="Kaku Y."/>
            <person name="Kodaira H."/>
            <person name="Kondo H."/>
            <person name="Sugawara M."/>
            <person name="Takahashi M."/>
            <person name="Kanda K."/>
            <person name="Yokoi T."/>
            <person name="Furuya T."/>
            <person name="Kikkawa E."/>
            <person name="Omura Y."/>
            <person name="Abe K."/>
            <person name="Kamihara K."/>
            <person name="Katsuta N."/>
            <person name="Sato K."/>
            <person name="Tanikawa M."/>
            <person name="Yamazaki M."/>
            <person name="Ninomiya K."/>
            <person name="Ishibashi T."/>
            <person name="Yamashita H."/>
            <person name="Murakawa K."/>
            <person name="Fujimori K."/>
            <person name="Tanai H."/>
            <person name="Kimata M."/>
            <person name="Watanabe M."/>
            <person name="Hiraoka S."/>
            <person name="Chiba Y."/>
            <person name="Ishida S."/>
            <person name="Ono Y."/>
            <person name="Takiguchi S."/>
            <person name="Watanabe S."/>
            <person name="Yosida M."/>
            <person name="Hotuta T."/>
            <person name="Kusano J."/>
            <person name="Kanehori K."/>
            <person name="Takahashi-Fujii A."/>
            <person name="Hara H."/>
            <person name="Tanase T.-O."/>
            <person name="Nomura Y."/>
            <person name="Togiya S."/>
            <person name="Komai F."/>
            <person name="Hara R."/>
            <person name="Takeuchi K."/>
            <person name="Arita M."/>
            <person name="Imose N."/>
            <person name="Musashino K."/>
            <person name="Yuuki H."/>
            <person name="Oshima A."/>
            <person name="Sasaki N."/>
            <person name="Aotsuka S."/>
            <person name="Yoshikawa Y."/>
            <person name="Matsunawa H."/>
            <person name="Ichihara T."/>
            <person name="Shiohata N."/>
            <person name="Sano S."/>
            <person name="Moriya S."/>
            <person name="Momiyama H."/>
            <person name="Satoh N."/>
            <person name="Takami S."/>
            <person name="Terashima Y."/>
            <person name="Suzuki O."/>
            <person name="Nakagawa S."/>
            <person name="Senoh A."/>
            <person name="Mizoguchi H."/>
            <person name="Goto Y."/>
            <person name="Shimizu F."/>
            <person name="Wakebe H."/>
            <person name="Hishigaki H."/>
            <person name="Watanabe T."/>
            <person name="Sugiyama A."/>
            <person name="Takemoto M."/>
            <person name="Kawakami B."/>
            <person name="Yamazaki M."/>
            <person name="Watanabe K."/>
            <person name="Kumagai A."/>
            <person name="Itakura S."/>
            <person name="Fukuzumi Y."/>
            <person name="Fujimori Y."/>
            <person name="Komiyama M."/>
            <person name="Tashiro H."/>
            <person name="Tanigami A."/>
            <person name="Fujiwara T."/>
            <person name="Ono T."/>
            <person name="Yamada K."/>
            <person name="Fujii Y."/>
            <person name="Ozaki K."/>
            <person name="Hirao M."/>
            <person name="Ohmori Y."/>
            <person name="Kawabata A."/>
            <person name="Hikiji T."/>
            <person name="Kobatake N."/>
            <person name="Inagaki H."/>
            <person name="Ikema Y."/>
            <person name="Okamoto S."/>
            <person name="Okitani R."/>
            <person name="Kawakami T."/>
            <person name="Noguchi S."/>
            <person name="Itoh T."/>
            <person name="Shigeta K."/>
            <person name="Senba T."/>
            <person name="Matsumura K."/>
            <person name="Nakajima Y."/>
            <person name="Mizuno T."/>
            <person name="Morinaga M."/>
            <person name="Sasaki M."/>
            <person name="Togashi T."/>
            <person name="Oyama M."/>
            <person name="Hata H."/>
            <person name="Watanabe M."/>
            <person name="Komatsu T."/>
            <person name="Mizushima-Sugano J."/>
            <person name="Satoh T."/>
            <person name="Shirai Y."/>
            <person name="Takahashi Y."/>
            <person name="Nakagawa K."/>
            <person name="Okumura K."/>
            <person name="Nagase T."/>
            <person name="Nomura N."/>
            <person name="Kikuchi H."/>
            <person name="Masuho Y."/>
            <person name="Yamashita R."/>
            <person name="Nakai K."/>
            <person name="Yada T."/>
            <person name="Nakamura Y."/>
            <person name="Ohara O."/>
            <person name="Isogai T."/>
            <person name="Sugano S."/>
        </authorList>
    </citation>
    <scope>NUCLEOTIDE SEQUENCE [LARGE SCALE MRNA] (ISOFORMS 1 AND 2)</scope>
    <source>
        <tissue>Placenta</tissue>
    </source>
</reference>
<reference key="3">
    <citation type="journal article" date="2005" name="Nature">
        <title>The DNA sequence of the human X chromosome.</title>
        <authorList>
            <person name="Ross M.T."/>
            <person name="Grafham D.V."/>
            <person name="Coffey A.J."/>
            <person name="Scherer S."/>
            <person name="McLay K."/>
            <person name="Muzny D."/>
            <person name="Platzer M."/>
            <person name="Howell G.R."/>
            <person name="Burrows C."/>
            <person name="Bird C.P."/>
            <person name="Frankish A."/>
            <person name="Lovell F.L."/>
            <person name="Howe K.L."/>
            <person name="Ashurst J.L."/>
            <person name="Fulton R.S."/>
            <person name="Sudbrak R."/>
            <person name="Wen G."/>
            <person name="Jones M.C."/>
            <person name="Hurles M.E."/>
            <person name="Andrews T.D."/>
            <person name="Scott C.E."/>
            <person name="Searle S."/>
            <person name="Ramser J."/>
            <person name="Whittaker A."/>
            <person name="Deadman R."/>
            <person name="Carter N.P."/>
            <person name="Hunt S.E."/>
            <person name="Chen R."/>
            <person name="Cree A."/>
            <person name="Gunaratne P."/>
            <person name="Havlak P."/>
            <person name="Hodgson A."/>
            <person name="Metzker M.L."/>
            <person name="Richards S."/>
            <person name="Scott G."/>
            <person name="Steffen D."/>
            <person name="Sodergren E."/>
            <person name="Wheeler D.A."/>
            <person name="Worley K.C."/>
            <person name="Ainscough R."/>
            <person name="Ambrose K.D."/>
            <person name="Ansari-Lari M.A."/>
            <person name="Aradhya S."/>
            <person name="Ashwell R.I."/>
            <person name="Babbage A.K."/>
            <person name="Bagguley C.L."/>
            <person name="Ballabio A."/>
            <person name="Banerjee R."/>
            <person name="Barker G.E."/>
            <person name="Barlow K.F."/>
            <person name="Barrett I.P."/>
            <person name="Bates K.N."/>
            <person name="Beare D.M."/>
            <person name="Beasley H."/>
            <person name="Beasley O."/>
            <person name="Beck A."/>
            <person name="Bethel G."/>
            <person name="Blechschmidt K."/>
            <person name="Brady N."/>
            <person name="Bray-Allen S."/>
            <person name="Bridgeman A.M."/>
            <person name="Brown A.J."/>
            <person name="Brown M.J."/>
            <person name="Bonnin D."/>
            <person name="Bruford E.A."/>
            <person name="Buhay C."/>
            <person name="Burch P."/>
            <person name="Burford D."/>
            <person name="Burgess J."/>
            <person name="Burrill W."/>
            <person name="Burton J."/>
            <person name="Bye J.M."/>
            <person name="Carder C."/>
            <person name="Carrel L."/>
            <person name="Chako J."/>
            <person name="Chapman J.C."/>
            <person name="Chavez D."/>
            <person name="Chen E."/>
            <person name="Chen G."/>
            <person name="Chen Y."/>
            <person name="Chen Z."/>
            <person name="Chinault C."/>
            <person name="Ciccodicola A."/>
            <person name="Clark S.Y."/>
            <person name="Clarke G."/>
            <person name="Clee C.M."/>
            <person name="Clegg S."/>
            <person name="Clerc-Blankenburg K."/>
            <person name="Clifford K."/>
            <person name="Cobley V."/>
            <person name="Cole C.G."/>
            <person name="Conquer J.S."/>
            <person name="Corby N."/>
            <person name="Connor R.E."/>
            <person name="David R."/>
            <person name="Davies J."/>
            <person name="Davis C."/>
            <person name="Davis J."/>
            <person name="Delgado O."/>
            <person name="Deshazo D."/>
            <person name="Dhami P."/>
            <person name="Ding Y."/>
            <person name="Dinh H."/>
            <person name="Dodsworth S."/>
            <person name="Draper H."/>
            <person name="Dugan-Rocha S."/>
            <person name="Dunham A."/>
            <person name="Dunn M."/>
            <person name="Durbin K.J."/>
            <person name="Dutta I."/>
            <person name="Eades T."/>
            <person name="Ellwood M."/>
            <person name="Emery-Cohen A."/>
            <person name="Errington H."/>
            <person name="Evans K.L."/>
            <person name="Faulkner L."/>
            <person name="Francis F."/>
            <person name="Frankland J."/>
            <person name="Fraser A.E."/>
            <person name="Galgoczy P."/>
            <person name="Gilbert J."/>
            <person name="Gill R."/>
            <person name="Gloeckner G."/>
            <person name="Gregory S.G."/>
            <person name="Gribble S."/>
            <person name="Griffiths C."/>
            <person name="Grocock R."/>
            <person name="Gu Y."/>
            <person name="Gwilliam R."/>
            <person name="Hamilton C."/>
            <person name="Hart E.A."/>
            <person name="Hawes A."/>
            <person name="Heath P.D."/>
            <person name="Heitmann K."/>
            <person name="Hennig S."/>
            <person name="Hernandez J."/>
            <person name="Hinzmann B."/>
            <person name="Ho S."/>
            <person name="Hoffs M."/>
            <person name="Howden P.J."/>
            <person name="Huckle E.J."/>
            <person name="Hume J."/>
            <person name="Hunt P.J."/>
            <person name="Hunt A.R."/>
            <person name="Isherwood J."/>
            <person name="Jacob L."/>
            <person name="Johnson D."/>
            <person name="Jones S."/>
            <person name="de Jong P.J."/>
            <person name="Joseph S.S."/>
            <person name="Keenan S."/>
            <person name="Kelly S."/>
            <person name="Kershaw J.K."/>
            <person name="Khan Z."/>
            <person name="Kioschis P."/>
            <person name="Klages S."/>
            <person name="Knights A.J."/>
            <person name="Kosiura A."/>
            <person name="Kovar-Smith C."/>
            <person name="Laird G.K."/>
            <person name="Langford C."/>
            <person name="Lawlor S."/>
            <person name="Leversha M."/>
            <person name="Lewis L."/>
            <person name="Liu W."/>
            <person name="Lloyd C."/>
            <person name="Lloyd D.M."/>
            <person name="Loulseged H."/>
            <person name="Loveland J.E."/>
            <person name="Lovell J.D."/>
            <person name="Lozado R."/>
            <person name="Lu J."/>
            <person name="Lyne R."/>
            <person name="Ma J."/>
            <person name="Maheshwari M."/>
            <person name="Matthews L.H."/>
            <person name="McDowall J."/>
            <person name="McLaren S."/>
            <person name="McMurray A."/>
            <person name="Meidl P."/>
            <person name="Meitinger T."/>
            <person name="Milne S."/>
            <person name="Miner G."/>
            <person name="Mistry S.L."/>
            <person name="Morgan M."/>
            <person name="Morris S."/>
            <person name="Mueller I."/>
            <person name="Mullikin J.C."/>
            <person name="Nguyen N."/>
            <person name="Nordsiek G."/>
            <person name="Nyakatura G."/>
            <person name="O'dell C.N."/>
            <person name="Okwuonu G."/>
            <person name="Palmer S."/>
            <person name="Pandian R."/>
            <person name="Parker D."/>
            <person name="Parrish J."/>
            <person name="Pasternak S."/>
            <person name="Patel D."/>
            <person name="Pearce A.V."/>
            <person name="Pearson D.M."/>
            <person name="Pelan S.E."/>
            <person name="Perez L."/>
            <person name="Porter K.M."/>
            <person name="Ramsey Y."/>
            <person name="Reichwald K."/>
            <person name="Rhodes S."/>
            <person name="Ridler K.A."/>
            <person name="Schlessinger D."/>
            <person name="Schueler M.G."/>
            <person name="Sehra H.K."/>
            <person name="Shaw-Smith C."/>
            <person name="Shen H."/>
            <person name="Sheridan E.M."/>
            <person name="Shownkeen R."/>
            <person name="Skuce C.D."/>
            <person name="Smith M.L."/>
            <person name="Sotheran E.C."/>
            <person name="Steingruber H.E."/>
            <person name="Steward C.A."/>
            <person name="Storey R."/>
            <person name="Swann R.M."/>
            <person name="Swarbreck D."/>
            <person name="Tabor P.E."/>
            <person name="Taudien S."/>
            <person name="Taylor T."/>
            <person name="Teague B."/>
            <person name="Thomas K."/>
            <person name="Thorpe A."/>
            <person name="Timms K."/>
            <person name="Tracey A."/>
            <person name="Trevanion S."/>
            <person name="Tromans A.C."/>
            <person name="d'Urso M."/>
            <person name="Verduzco D."/>
            <person name="Villasana D."/>
            <person name="Waldron L."/>
            <person name="Wall M."/>
            <person name="Wang Q."/>
            <person name="Warren J."/>
            <person name="Warry G.L."/>
            <person name="Wei X."/>
            <person name="West A."/>
            <person name="Whitehead S.L."/>
            <person name="Whiteley M.N."/>
            <person name="Wilkinson J.E."/>
            <person name="Willey D.L."/>
            <person name="Williams G."/>
            <person name="Williams L."/>
            <person name="Williamson A."/>
            <person name="Williamson H."/>
            <person name="Wilming L."/>
            <person name="Woodmansey R.L."/>
            <person name="Wray P.W."/>
            <person name="Yen J."/>
            <person name="Zhang J."/>
            <person name="Zhou J."/>
            <person name="Zoghbi H."/>
            <person name="Zorilla S."/>
            <person name="Buck D."/>
            <person name="Reinhardt R."/>
            <person name="Poustka A."/>
            <person name="Rosenthal A."/>
            <person name="Lehrach H."/>
            <person name="Meindl A."/>
            <person name="Minx P.J."/>
            <person name="Hillier L.W."/>
            <person name="Willard H.F."/>
            <person name="Wilson R.K."/>
            <person name="Waterston R.H."/>
            <person name="Rice C.M."/>
            <person name="Vaudin M."/>
            <person name="Coulson A."/>
            <person name="Nelson D.L."/>
            <person name="Weinstock G."/>
            <person name="Sulston J.E."/>
            <person name="Durbin R.M."/>
            <person name="Hubbard T."/>
            <person name="Gibbs R.A."/>
            <person name="Beck S."/>
            <person name="Rogers J."/>
            <person name="Bentley D.R."/>
        </authorList>
    </citation>
    <scope>NUCLEOTIDE SEQUENCE [LARGE SCALE GENOMIC DNA]</scope>
</reference>
<reference key="4">
    <citation type="journal article" date="2004" name="Genome Res.">
        <title>The status, quality, and expansion of the NIH full-length cDNA project: the Mammalian Gene Collection (MGC).</title>
        <authorList>
            <consortium name="The MGC Project Team"/>
        </authorList>
    </citation>
    <scope>NUCLEOTIDE SEQUENCE [LARGE SCALE MRNA] (ISOFORM 1)</scope>
    <scope>NUCLEOTIDE SEQUENCE [LARGE SCALE MRNA] OF 176-605 (ISOFORM 3)</scope>
    <source>
        <tissue>Placenta</tissue>
    </source>
</reference>
<reference key="5">
    <citation type="journal article" date="2005" name="DNA Res.">
        <title>Signal sequence and keyword trap in silico for selection of full-length human cDNAs encoding secretion or membrane proteins from oligo-capped cDNA libraries.</title>
        <authorList>
            <person name="Otsuki T."/>
            <person name="Ota T."/>
            <person name="Nishikawa T."/>
            <person name="Hayashi K."/>
            <person name="Suzuki Y."/>
            <person name="Yamamoto J."/>
            <person name="Wakamatsu A."/>
            <person name="Kimura K."/>
            <person name="Sakamoto K."/>
            <person name="Hatano N."/>
            <person name="Kawai Y."/>
            <person name="Ishii S."/>
            <person name="Saito K."/>
            <person name="Kojima S."/>
            <person name="Sugiyama T."/>
            <person name="Ono T."/>
            <person name="Okano K."/>
            <person name="Yoshikawa Y."/>
            <person name="Aotsuka S."/>
            <person name="Sasaki N."/>
            <person name="Hattori A."/>
            <person name="Okumura K."/>
            <person name="Nagai K."/>
            <person name="Sugano S."/>
            <person name="Isogai T."/>
        </authorList>
    </citation>
    <scope>NUCLEOTIDE SEQUENCE [LARGE SCALE MRNA] OF 136-605</scope>
    <source>
        <tissue>Teratocarcinoma</tissue>
    </source>
</reference>
<reference key="6">
    <citation type="journal article" date="2007" name="BMC Genomics">
        <title>The full-ORF clone resource of the German cDNA consortium.</title>
        <authorList>
            <person name="Bechtel S."/>
            <person name="Rosenfelder H."/>
            <person name="Duda A."/>
            <person name="Schmidt C.P."/>
            <person name="Ernst U."/>
            <person name="Wellenreuther R."/>
            <person name="Mehrle A."/>
            <person name="Schuster C."/>
            <person name="Bahr A."/>
            <person name="Bloecker H."/>
            <person name="Heubner D."/>
            <person name="Hoerlein A."/>
            <person name="Michel G."/>
            <person name="Wedler H."/>
            <person name="Koehrer K."/>
            <person name="Ottenwaelder B."/>
            <person name="Poustka A."/>
            <person name="Wiemann S."/>
            <person name="Schupp I."/>
        </authorList>
    </citation>
    <scope>NUCLEOTIDE SEQUENCE [LARGE SCALE MRNA] OF 465-605</scope>
    <source>
        <tissue>Amygdala</tissue>
    </source>
</reference>
<reference key="7">
    <citation type="journal article" date="2019" name="Clin. Genet.">
        <title>A HS6ST2 gene variant associated with X-linked intellectual disability and severe myopia in two male twins.</title>
        <authorList>
            <person name="Paganini L."/>
            <person name="Hadi L.A."/>
            <person name="Chetta M."/>
            <person name="Rovina D."/>
            <person name="Fontana L."/>
            <person name="Colapietro P."/>
            <person name="Bonaparte E."/>
            <person name="Pezzani L."/>
            <person name="Marchisio P."/>
            <person name="Tabano S.M."/>
            <person name="Costanza J."/>
            <person name="Sirchia S.M."/>
            <person name="Riboni L."/>
            <person name="Milani D."/>
            <person name="Miozzo M."/>
        </authorList>
    </citation>
    <scope>INVOLVEMENT IN MRXSPM</scope>
    <scope>FUNCTION</scope>
    <scope>VARIANT MRXSPM ARG-306</scope>
    <scope>CHARACTERIZATION OF VARIANT MRXSPM ARG-306</scope>
</reference>
<gene>
    <name evidence="10" type="primary">HS6ST2</name>
    <name type="ORF">PSEC0092</name>
</gene>
<name>H6ST2_HUMAN</name>
<organism>
    <name type="scientific">Homo sapiens</name>
    <name type="common">Human</name>
    <dbReference type="NCBI Taxonomy" id="9606"/>
    <lineage>
        <taxon>Eukaryota</taxon>
        <taxon>Metazoa</taxon>
        <taxon>Chordata</taxon>
        <taxon>Craniata</taxon>
        <taxon>Vertebrata</taxon>
        <taxon>Euteleostomi</taxon>
        <taxon>Mammalia</taxon>
        <taxon>Eutheria</taxon>
        <taxon>Euarchontoglires</taxon>
        <taxon>Primates</taxon>
        <taxon>Haplorrhini</taxon>
        <taxon>Catarrhini</taxon>
        <taxon>Hominidae</taxon>
        <taxon>Homo</taxon>
    </lineage>
</organism>